<dbReference type="EMBL" id="S72922">
    <property type="protein sequence ID" value="AAC60488.1"/>
    <property type="molecule type" value="Genomic_DNA"/>
</dbReference>
<dbReference type="RefSeq" id="WP_032488695.1">
    <property type="nucleotide sequence ID" value="NZ_CP054420.1"/>
</dbReference>
<dbReference type="SMR" id="Q53446"/>
<dbReference type="GO" id="GO:0005576">
    <property type="term" value="C:extracellular region"/>
    <property type="evidence" value="ECO:0007669"/>
    <property type="project" value="UniProtKB-SubCell"/>
</dbReference>
<dbReference type="GO" id="GO:0005186">
    <property type="term" value="F:pheromone activity"/>
    <property type="evidence" value="ECO:0007669"/>
    <property type="project" value="InterPro"/>
</dbReference>
<dbReference type="GO" id="GO:0042742">
    <property type="term" value="P:defense response to bacterium"/>
    <property type="evidence" value="ECO:0007669"/>
    <property type="project" value="UniProtKB-KW"/>
</dbReference>
<dbReference type="GO" id="GO:0031640">
    <property type="term" value="P:killing of cells of another organism"/>
    <property type="evidence" value="ECO:0007669"/>
    <property type="project" value="UniProtKB-KW"/>
</dbReference>
<dbReference type="Gene3D" id="1.20.5.130">
    <property type="match status" value="1"/>
</dbReference>
<dbReference type="InterPro" id="IPR002633">
    <property type="entry name" value="Bacteriocin_IIa"/>
</dbReference>
<dbReference type="InterPro" id="IPR023384">
    <property type="entry name" value="Bacteriocin_IIa_CS"/>
</dbReference>
<dbReference type="InterPro" id="IPR023388">
    <property type="entry name" value="Bacteriocin_IIa_dom_sf"/>
</dbReference>
<dbReference type="InterPro" id="IPR004288">
    <property type="entry name" value="Competence_ComC"/>
</dbReference>
<dbReference type="Pfam" id="PF01721">
    <property type="entry name" value="Bacteriocin_II"/>
    <property type="match status" value="1"/>
</dbReference>
<dbReference type="Pfam" id="PF03047">
    <property type="entry name" value="ComC"/>
    <property type="match status" value="1"/>
</dbReference>
<dbReference type="PROSITE" id="PS60030">
    <property type="entry name" value="BACTERIOCIN_IIA"/>
    <property type="match status" value="1"/>
</dbReference>
<name>LCCB_LEUCA</name>
<reference key="1">
    <citation type="journal article" date="1994" name="Curr. Microbiol.">
        <title>Characterization of leucocin B-Ta11a: a bacteriocin from Leuconostoc carnosum Ta11a isolated from meat.</title>
        <authorList>
            <person name="Felix J.V."/>
            <person name="Papathanasopoulos M.A."/>
            <person name="Smith A.A."/>
            <person name="von Holy A."/>
            <person name="Hastings J.W."/>
        </authorList>
    </citation>
    <scope>NUCLEOTIDE SEQUENCE [GENOMIC DNA]</scope>
    <source>
        <strain>Ta11a</strain>
    </source>
</reference>
<feature type="propeptide" id="PRO_0000002740" evidence="1">
    <location>
        <begin position="1"/>
        <end position="24"/>
    </location>
</feature>
<feature type="chain" id="PRO_0000002741" description="Bacteriocin leucocin-B">
    <location>
        <begin position="25"/>
        <end position="61"/>
    </location>
</feature>
<feature type="disulfide bond" evidence="1">
    <location>
        <begin position="33"/>
        <end position="38"/>
    </location>
</feature>
<sequence length="61" mass="6568">MNNMKSADNYQQLDNNALEQVVGGKYYGNGVHCTKSGCSVNWGEAFSAGVHRLANGGNGFW</sequence>
<accession>Q53446</accession>
<proteinExistence type="inferred from homology"/>
<organism>
    <name type="scientific">Leuconostoc carnosum</name>
    <dbReference type="NCBI Taxonomy" id="1252"/>
    <lineage>
        <taxon>Bacteria</taxon>
        <taxon>Bacillati</taxon>
        <taxon>Bacillota</taxon>
        <taxon>Bacilli</taxon>
        <taxon>Lactobacillales</taxon>
        <taxon>Lactobacillaceae</taxon>
        <taxon>Leuconostoc</taxon>
    </lineage>
</organism>
<comment type="function">
    <text>Active against L.monocytogenes and several lactic acid bacteria.</text>
</comment>
<comment type="subcellular location">
    <subcellularLocation>
        <location>Secreted</location>
    </subcellularLocation>
</comment>
<comment type="similarity">
    <text evidence="2">Belongs to the bacteriocin class IIA/YGNGV family.</text>
</comment>
<protein>
    <recommendedName>
        <fullName>Bacteriocin leucocin-B</fullName>
    </recommendedName>
    <alternativeName>
        <fullName>Leucocin B-Ta11a</fullName>
    </alternativeName>
</protein>
<geneLocation type="plasmid">
    <name>8.9-MDa</name>
</geneLocation>
<keyword id="KW-0044">Antibiotic</keyword>
<keyword id="KW-0929">Antimicrobial</keyword>
<keyword id="KW-0078">Bacteriocin</keyword>
<keyword id="KW-1015">Disulfide bond</keyword>
<keyword id="KW-0614">Plasmid</keyword>
<keyword id="KW-0964">Secreted</keyword>
<evidence type="ECO:0000250" key="1"/>
<evidence type="ECO:0000305" key="2"/>